<protein>
    <recommendedName>
        <fullName evidence="9">Plastid division protein CDP1, chloroplastic</fullName>
    </recommendedName>
    <alternativeName>
        <fullName>ARC6-homolog protein</fullName>
    </alternativeName>
    <alternativeName>
        <fullName evidence="9">Protein CHLOROPLAST DIVISION SITE POSITIONING 1</fullName>
        <shortName evidence="9">AtCDP1</shortName>
    </alternativeName>
    <alternativeName>
        <fullName evidence="8">Protein PARALOG OF ARC6</fullName>
    </alternativeName>
    <alternativeName>
        <fullName evidence="10">Protein STROMULE BIOGENESIS ALTERED 2</fullName>
    </alternativeName>
</protein>
<sequence>MPVAYTFPVLPSSCLLCGISNRSTSFVVDRPELQISGLLVVRSESGEFFGSGLSLRRFQREGRRRLNAAGGGIHVVDNAPSRTSSLAASTSTIELPVTCYQLIGVSEQAEKDEVVKSVINLKKTDAEEGYTMEAAAARQDLLMDVRDKLLFESEYAGNLKEKIAPKSPLRIPWAWLPGALCLLQEVGQEKLVLDIGRAALRNLDSKPYIHDIFLSMALAECAIAKAAFEVNKVSQGFEALARAQSFLKSKVTLGKLALLTQIEESLEELAPPCTLDLLGLPRTPENAERRRGAIAALRELLRQGLSVEASCQIQDWPCFLSQAISRLLATEIVDLLPWDDLAITRKNKKSLESHNQRVVIDFNCFYMVLLGHIAVGFSGKQNETINKAKTICECLIASEGVDLKFEEAFCSFLLKQGSEAEALEKLKQLESNSDSAVRNSILGKESRSTSATPSLEAWLMESVLANFPDTRGCSPSLANFFRAEKKYPENKKMGSPSIMNHKTNQRPLSTTQFVNSSQHLYTAVEQLTPTDLQSPVVSAKNNDETSASMPSVQLKRNLGVHKNKIWDEWLSQSSLIGRVSVVALLGCTVFFSLKLSGIRSGRLQSMPISVSARPHSESDSFLWKTESGNFRKNLDSVNRNGIVGNIKVLIDMLKMHCGEHPDALYLKSSGQSATSLSHSASELHKRPMDTEEAEELVRQWENVKAEALGPTHQVYSLSEVLDESMLVQWQTLAQTAEAKSCYWRFVLLHLEVLQAHIFEDGIAGEAAEIEALLEEAAELVDESQPKNAKYYSTYKIRYILKKQEDGLWKFCQSDIQIQK</sequence>
<evidence type="ECO:0000255" key="1"/>
<evidence type="ECO:0000269" key="2">
    <source>
    </source>
</evidence>
<evidence type="ECO:0000269" key="3">
    <source>
    </source>
</evidence>
<evidence type="ECO:0000269" key="4">
    <source>
    </source>
</evidence>
<evidence type="ECO:0000269" key="5">
    <source>
    </source>
</evidence>
<evidence type="ECO:0000269" key="6">
    <source>
    </source>
</evidence>
<evidence type="ECO:0000269" key="7">
    <source>
    </source>
</evidence>
<evidence type="ECO:0000303" key="8">
    <source>
    </source>
</evidence>
<evidence type="ECO:0000303" key="9">
    <source>
    </source>
</evidence>
<evidence type="ECO:0000303" key="10">
    <source>
    </source>
</evidence>
<evidence type="ECO:0000305" key="11"/>
<evidence type="ECO:0000312" key="12">
    <source>
        <dbReference type="Araport" id="AT3G19180"/>
    </source>
</evidence>
<evidence type="ECO:0000312" key="13">
    <source>
        <dbReference type="EMBL" id="BAB02958.1"/>
    </source>
</evidence>
<evidence type="ECO:0007829" key="14">
    <source>
        <dbReference type="PDB" id="5U9L"/>
    </source>
</evidence>
<evidence type="ECO:0007829" key="15">
    <source>
        <dbReference type="PDB" id="6JZF"/>
    </source>
</evidence>
<dbReference type="EMBL" id="AP000419">
    <property type="protein sequence ID" value="BAB02958.1"/>
    <property type="status" value="ALT_SEQ"/>
    <property type="molecule type" value="Genomic_DNA"/>
</dbReference>
<dbReference type="EMBL" id="CP002686">
    <property type="protein sequence ID" value="AEE76203.1"/>
    <property type="molecule type" value="Genomic_DNA"/>
</dbReference>
<dbReference type="EMBL" id="CP002686">
    <property type="protein sequence ID" value="AEE76204.1"/>
    <property type="molecule type" value="Genomic_DNA"/>
</dbReference>
<dbReference type="EMBL" id="AY074283">
    <property type="protein sequence ID" value="AAL66980.1"/>
    <property type="molecule type" value="mRNA"/>
</dbReference>
<dbReference type="RefSeq" id="NP_001030725.1">
    <molecule id="Q8VY16-2"/>
    <property type="nucleotide sequence ID" value="NM_001035648.1"/>
</dbReference>
<dbReference type="RefSeq" id="NP_188549.2">
    <molecule id="Q8VY16-1"/>
    <property type="nucleotide sequence ID" value="NM_112805.5"/>
</dbReference>
<dbReference type="PDB" id="5U9L">
    <property type="method" value="X-ray"/>
    <property type="resolution" value="2.52 A"/>
    <property type="chains" value="A/B=596-819"/>
</dbReference>
<dbReference type="PDB" id="5U9O">
    <property type="method" value="X-ray"/>
    <property type="resolution" value="3.37 A"/>
    <property type="chains" value="A/B/C/D/E/F/G/H=684-819"/>
</dbReference>
<dbReference type="PDB" id="6JZF">
    <property type="method" value="X-ray"/>
    <property type="resolution" value="2.53 A"/>
    <property type="chains" value="A/B=640-819"/>
</dbReference>
<dbReference type="PDB" id="6JZN">
    <property type="method" value="X-ray"/>
    <property type="resolution" value="2.89 A"/>
    <property type="chains" value="A/B/C/D=685-819"/>
</dbReference>
<dbReference type="PDBsum" id="5U9L"/>
<dbReference type="PDBsum" id="5U9O"/>
<dbReference type="PDBsum" id="6JZF"/>
<dbReference type="PDBsum" id="6JZN"/>
<dbReference type="SMR" id="Q8VY16"/>
<dbReference type="BioGRID" id="6785">
    <property type="interactions" value="4"/>
</dbReference>
<dbReference type="FunCoup" id="Q8VY16">
    <property type="interactions" value="1898"/>
</dbReference>
<dbReference type="IntAct" id="Q8VY16">
    <property type="interactions" value="1"/>
</dbReference>
<dbReference type="STRING" id="3702.Q8VY16"/>
<dbReference type="GlyGen" id="Q8VY16">
    <property type="glycosylation" value="1 site"/>
</dbReference>
<dbReference type="iPTMnet" id="Q8VY16"/>
<dbReference type="PaxDb" id="3702-AT3G19180.1"/>
<dbReference type="ProteomicsDB" id="224471">
    <molecule id="Q8VY16-1"/>
</dbReference>
<dbReference type="EnsemblPlants" id="AT3G19180.1">
    <molecule id="Q8VY16-1"/>
    <property type="protein sequence ID" value="AT3G19180.1"/>
    <property type="gene ID" value="AT3G19180"/>
</dbReference>
<dbReference type="EnsemblPlants" id="AT3G19180.2">
    <molecule id="Q8VY16-2"/>
    <property type="protein sequence ID" value="AT3G19180.2"/>
    <property type="gene ID" value="AT3G19180"/>
</dbReference>
<dbReference type="GeneID" id="821452"/>
<dbReference type="Gramene" id="AT3G19180.1">
    <molecule id="Q8VY16-1"/>
    <property type="protein sequence ID" value="AT3G19180.1"/>
    <property type="gene ID" value="AT3G19180"/>
</dbReference>
<dbReference type="Gramene" id="AT3G19180.2">
    <molecule id="Q8VY16-2"/>
    <property type="protein sequence ID" value="AT3G19180.2"/>
    <property type="gene ID" value="AT3G19180"/>
</dbReference>
<dbReference type="KEGG" id="ath:AT3G19180"/>
<dbReference type="Araport" id="AT3G19180"/>
<dbReference type="TAIR" id="AT3G19180">
    <property type="gene designation" value="PARC6"/>
</dbReference>
<dbReference type="eggNOG" id="ENOG502QT67">
    <property type="taxonomic scope" value="Eukaryota"/>
</dbReference>
<dbReference type="HOGENOM" id="CLU_017942_1_0_1"/>
<dbReference type="InParanoid" id="Q8VY16"/>
<dbReference type="OMA" id="IVKSVMH"/>
<dbReference type="PhylomeDB" id="Q8VY16"/>
<dbReference type="PRO" id="PR:Q8VY16"/>
<dbReference type="Proteomes" id="UP000006548">
    <property type="component" value="Chromosome 3"/>
</dbReference>
<dbReference type="ExpressionAtlas" id="Q8VY16">
    <property type="expression patterns" value="baseline and differential"/>
</dbReference>
<dbReference type="GO" id="GO:0009507">
    <property type="term" value="C:chloroplast"/>
    <property type="evidence" value="ECO:0000314"/>
    <property type="project" value="TAIR"/>
</dbReference>
<dbReference type="GO" id="GO:0009706">
    <property type="term" value="C:chloroplast inner membrane"/>
    <property type="evidence" value="ECO:0007669"/>
    <property type="project" value="UniProtKB-SubCell"/>
</dbReference>
<dbReference type="GO" id="GO:0009528">
    <property type="term" value="C:plastid inner membrane"/>
    <property type="evidence" value="ECO:0000314"/>
    <property type="project" value="TAIR"/>
</dbReference>
<dbReference type="GO" id="GO:0010020">
    <property type="term" value="P:chloroplast fission"/>
    <property type="evidence" value="ECO:0000314"/>
    <property type="project" value="UniProtKB"/>
</dbReference>
<dbReference type="GO" id="GO:0009658">
    <property type="term" value="P:chloroplast organization"/>
    <property type="evidence" value="ECO:0000315"/>
    <property type="project" value="UniProtKB"/>
</dbReference>
<dbReference type="GO" id="GO:0043572">
    <property type="term" value="P:plastid fission"/>
    <property type="evidence" value="ECO:0000315"/>
    <property type="project" value="TAIR"/>
</dbReference>
<dbReference type="InterPro" id="IPR044685">
    <property type="entry name" value="ARC6-like"/>
</dbReference>
<dbReference type="InterPro" id="IPR025344">
    <property type="entry name" value="ARC6-like_IMS"/>
</dbReference>
<dbReference type="PANTHER" id="PTHR33925:SF2">
    <property type="entry name" value="PLASTID DIVISION PROTEIN CDP1, CHLOROPLASTIC"/>
    <property type="match status" value="1"/>
</dbReference>
<dbReference type="PANTHER" id="PTHR33925">
    <property type="entry name" value="PLASTID DIVISION PROTEIN CDP1, CHLOROPLASTIC-RELATED"/>
    <property type="match status" value="1"/>
</dbReference>
<dbReference type="Pfam" id="PF23468">
    <property type="entry name" value="ARC6"/>
    <property type="match status" value="1"/>
</dbReference>
<dbReference type="Pfam" id="PF13355">
    <property type="entry name" value="ARC6-like_IMS"/>
    <property type="match status" value="1"/>
</dbReference>
<reference key="1">
    <citation type="journal article" date="2000" name="DNA Res.">
        <title>Structural analysis of Arabidopsis thaliana chromosome 3. II. Sequence features of the 4,251,695 bp regions covered by 90 P1, TAC and BAC clones.</title>
        <authorList>
            <person name="Kaneko T."/>
            <person name="Katoh T."/>
            <person name="Sato S."/>
            <person name="Nakamura Y."/>
            <person name="Asamizu E."/>
            <person name="Tabata S."/>
        </authorList>
    </citation>
    <scope>NUCLEOTIDE SEQUENCE [LARGE SCALE GENOMIC DNA]</scope>
    <source>
        <strain>cv. Columbia</strain>
    </source>
</reference>
<reference key="2">
    <citation type="journal article" date="2017" name="Plant J.">
        <title>Araport11: a complete reannotation of the Arabidopsis thaliana reference genome.</title>
        <authorList>
            <person name="Cheng C.Y."/>
            <person name="Krishnakumar V."/>
            <person name="Chan A.P."/>
            <person name="Thibaud-Nissen F."/>
            <person name="Schobel S."/>
            <person name="Town C.D."/>
        </authorList>
    </citation>
    <scope>GENOME REANNOTATION</scope>
    <source>
        <strain>cv. Columbia</strain>
    </source>
</reference>
<reference key="3">
    <citation type="journal article" date="2003" name="Science">
        <title>Empirical analysis of transcriptional activity in the Arabidopsis genome.</title>
        <authorList>
            <person name="Yamada K."/>
            <person name="Lim J."/>
            <person name="Dale J.M."/>
            <person name="Chen H."/>
            <person name="Shinn P."/>
            <person name="Palm C.J."/>
            <person name="Southwick A.M."/>
            <person name="Wu H.C."/>
            <person name="Kim C.J."/>
            <person name="Nguyen M."/>
            <person name="Pham P.K."/>
            <person name="Cheuk R.F."/>
            <person name="Karlin-Newmann G."/>
            <person name="Liu S.X."/>
            <person name="Lam B."/>
            <person name="Sakano H."/>
            <person name="Wu T."/>
            <person name="Yu G."/>
            <person name="Miranda M."/>
            <person name="Quach H.L."/>
            <person name="Tripp M."/>
            <person name="Chang C.H."/>
            <person name="Lee J.M."/>
            <person name="Toriumi M.J."/>
            <person name="Chan M.M."/>
            <person name="Tang C.C."/>
            <person name="Onodera C.S."/>
            <person name="Deng J.M."/>
            <person name="Akiyama K."/>
            <person name="Ansari Y."/>
            <person name="Arakawa T."/>
            <person name="Banh J."/>
            <person name="Banno F."/>
            <person name="Bowser L."/>
            <person name="Brooks S.Y."/>
            <person name="Carninci P."/>
            <person name="Chao Q."/>
            <person name="Choy N."/>
            <person name="Enju A."/>
            <person name="Goldsmith A.D."/>
            <person name="Gurjal M."/>
            <person name="Hansen N.F."/>
            <person name="Hayashizaki Y."/>
            <person name="Johnson-Hopson C."/>
            <person name="Hsuan V.W."/>
            <person name="Iida K."/>
            <person name="Karnes M."/>
            <person name="Khan S."/>
            <person name="Koesema E."/>
            <person name="Ishida J."/>
            <person name="Jiang P.X."/>
            <person name="Jones T."/>
            <person name="Kawai J."/>
            <person name="Kamiya A."/>
            <person name="Meyers C."/>
            <person name="Nakajima M."/>
            <person name="Narusaka M."/>
            <person name="Seki M."/>
            <person name="Sakurai T."/>
            <person name="Satou M."/>
            <person name="Tamse R."/>
            <person name="Vaysberg M."/>
            <person name="Wallender E.K."/>
            <person name="Wong C."/>
            <person name="Yamamura Y."/>
            <person name="Yuan S."/>
            <person name="Shinozaki K."/>
            <person name="Davis R.W."/>
            <person name="Theologis A."/>
            <person name="Ecker J.R."/>
        </authorList>
    </citation>
    <scope>NUCLEOTIDE SEQUENCE [LARGE SCALE MRNA] (ISOFORM 1)</scope>
    <source>
        <strain>cv. Columbia</strain>
    </source>
</reference>
<reference key="4">
    <citation type="journal article" date="2009" name="Cell Res.">
        <title>CDP1, a novel component of chloroplast division site positioning system in Arabidopsis.</title>
        <authorList>
            <person name="Zhang M."/>
            <person name="Hu Y."/>
            <person name="Jia J."/>
            <person name="Li D."/>
            <person name="Zhang R."/>
            <person name="Gao H."/>
            <person name="He Y."/>
        </authorList>
    </citation>
    <scope>FUNCTION</scope>
    <scope>DISRUPTION PHENOTYPE</scope>
    <scope>INTERACTION WITH ARC3</scope>
    <scope>SELF-INTERACTION</scope>
    <scope>TISSUE SPECIFICITY</scope>
</reference>
<reference key="5">
    <citation type="journal article" date="2009" name="Plant J.">
        <title>PARC6, a novel chloroplast division factor, influences FtsZ assembly and is required for recruitment of PDV1 during chloroplast division in Arabidopsis.</title>
        <authorList>
            <person name="Glynn J.M."/>
            <person name="Yang Y."/>
            <person name="Vitha S."/>
            <person name="Schmitz A.J."/>
            <person name="Hemmes M."/>
            <person name="Miyagishima S.-Y."/>
            <person name="Osteryoung K.W."/>
        </authorList>
    </citation>
    <scope>FUNCTION</scope>
    <scope>DISRUPTION PHENOTYPE</scope>
    <scope>MUTAGENESIS OF ASP-112</scope>
    <scope>SUBCELLULAR LOCATION</scope>
    <scope>TOPOLOGY</scope>
    <scope>INTERACTION WITH ARC3</scope>
    <source>
        <strain>cv. Columbia</strain>
    </source>
</reference>
<reference key="6">
    <citation type="journal article" date="2013" name="PLoS ONE">
        <title>The chloroplast min system functions differentially in two specific nongreen plastids in Arabidopsis thaliana.</title>
        <authorList>
            <person name="Wang P."/>
            <person name="Zhang J."/>
            <person name="Su J."/>
            <person name="Wang P."/>
            <person name="Liu J."/>
            <person name="Liu B."/>
            <person name="Feng D."/>
            <person name="Wang J."/>
            <person name="Wang H."/>
        </authorList>
    </citation>
    <scope>FUNCTION</scope>
    <scope>DISRUPTION PHENOTYPE</scope>
    <source>
        <strain>cv. Columbia</strain>
        <strain>cv. Landsberg erecta</strain>
    </source>
</reference>
<reference key="7">
    <citation type="journal article" date="2016" name="Plant Physiol.">
        <title>Roles of Arabidopsis PARC6 in Coordination of the Chloroplast Division Complex and Negative Regulation of FtsZ Assembly.</title>
        <authorList>
            <person name="Zhang M."/>
            <person name="Chen C."/>
            <person name="Froehlich J.E."/>
            <person name="TerBush A.D."/>
            <person name="Osteryoung K.W."/>
        </authorList>
    </citation>
    <scope>FUNCTION</scope>
    <scope>INTERACTION WITH ARC3; PDV1 AND FTSZ2</scope>
    <scope>TOPOLOGY</scope>
    <source>
        <strain>cv. Columbia</strain>
    </source>
</reference>
<reference key="8">
    <citation type="journal article" date="2018" name="Physiol. Plantarum">
        <title>Isolation and analysis of a stromule-overproducing Arabidopsis mutant suggest the role of PARC6 in plastid morphology maintenance in the leaf epidermis.</title>
        <authorList>
            <person name="Itoh R.D."/>
            <person name="Ishikawa H."/>
            <person name="Nakajima K.P."/>
            <person name="Moriyama S."/>
            <person name="Fujiwara M.T."/>
        </authorList>
    </citation>
    <scope>FUNCTION</scope>
    <scope>DISRUPTION PHENOTYPE</scope>
    <scope>SUBUNIT</scope>
    <scope>INTERACTION WITH MIND1; FTSZ2-1 AND FTSZ2-2</scope>
    <source>
        <strain>cv. Columbia</strain>
    </source>
</reference>
<reference key="9">
    <citation type="journal article" date="2019" name="Plant Cell">
        <title>ARC3 activation by PARC6 promotes FtsZ-ring remodeling at the chloroplast division site.</title>
        <authorList>
            <person name="Chen C."/>
            <person name="Cao L."/>
            <person name="Yang Y."/>
            <person name="Porter K.J."/>
            <person name="Osteryoung K.W."/>
        </authorList>
    </citation>
    <scope>FUNCTION</scope>
    <scope>SUBUNIT</scope>
    <source>
        <strain>cv. Columbia</strain>
    </source>
</reference>
<reference key="10">
    <citation type="submission" date="2016-12" db="PDB data bank">
        <title>Cocrystal structure of the intermembrane space region of the plastid division proteins PARC6 and PDV1.</title>
        <authorList>
            <person name="Delmar J.A."/>
            <person name="Yu E.W."/>
            <person name="Osteryoung K.W."/>
        </authorList>
    </citation>
    <scope>X-RAY CRYSTALLOGRAPHY (2.52 ANGSTROMS) OF 596-819</scope>
</reference>
<reference key="11">
    <citation type="submission" date="2019-05" db="PDB data bank">
        <title>Structure of PARC6 from Arabidopsis.</title>
        <authorList>
            <person name="Feng Y."/>
            <person name="Liu Z."/>
        </authorList>
    </citation>
    <scope>X-RAY CRYSTALLOGRAPHY (2.53 ANGSTROMS) OF 640-819</scope>
</reference>
<gene>
    <name evidence="9" type="primary">CDP1</name>
    <name type="synonym">ARC6H</name>
    <name evidence="8" type="synonym">PARC6</name>
    <name evidence="10" type="synonym">SUBA2</name>
    <name evidence="12" type="ordered locus">At3g19180</name>
    <name evidence="13" type="ORF">MVI11.9</name>
</gene>
<accession>Q8VY16</accession>
<accession>Q2V3U5</accession>
<accession>Q9LJL2</accession>
<name>CDP1_ARATH</name>
<keyword id="KW-0002">3D-structure</keyword>
<keyword id="KW-0025">Alternative splicing</keyword>
<keyword id="KW-0150">Chloroplast</keyword>
<keyword id="KW-0175">Coiled coil</keyword>
<keyword id="KW-0472">Membrane</keyword>
<keyword id="KW-0934">Plastid</keyword>
<keyword id="KW-1001">Plastid inner membrane</keyword>
<keyword id="KW-1185">Reference proteome</keyword>
<keyword id="KW-0809">Transit peptide</keyword>
<keyword id="KW-0812">Transmembrane</keyword>
<keyword id="KW-1133">Transmembrane helix</keyword>
<organism>
    <name type="scientific">Arabidopsis thaliana</name>
    <name type="common">Mouse-ear cress</name>
    <dbReference type="NCBI Taxonomy" id="3702"/>
    <lineage>
        <taxon>Eukaryota</taxon>
        <taxon>Viridiplantae</taxon>
        <taxon>Streptophyta</taxon>
        <taxon>Embryophyta</taxon>
        <taxon>Tracheophyta</taxon>
        <taxon>Spermatophyta</taxon>
        <taxon>Magnoliopsida</taxon>
        <taxon>eudicotyledons</taxon>
        <taxon>Gunneridae</taxon>
        <taxon>Pentapetalae</taxon>
        <taxon>rosids</taxon>
        <taxon>malvids</taxon>
        <taxon>Brassicales</taxon>
        <taxon>Brassicaceae</taxon>
        <taxon>Camelineae</taxon>
        <taxon>Arabidopsis</taxon>
    </lineage>
</organism>
<feature type="transit peptide" description="Chloroplast" evidence="1">
    <location>
        <begin position="1"/>
        <end position="76"/>
    </location>
</feature>
<feature type="chain" id="PRO_0000406912" description="Plastid division protein CDP1, chloroplastic">
    <location>
        <begin position="77"/>
        <end position="819"/>
    </location>
</feature>
<feature type="topological domain" description="Stromal" evidence="5">
    <location>
        <begin position="77"/>
        <end position="572"/>
    </location>
</feature>
<feature type="transmembrane region" description="Helical" evidence="5">
    <location>
        <begin position="573"/>
        <end position="593"/>
    </location>
</feature>
<feature type="topological domain" description="Chloroplast intermembrane" evidence="5">
    <location>
        <begin position="594"/>
        <end position="819"/>
    </location>
</feature>
<feature type="coiled-coil region" evidence="1">
    <location>
        <begin position="419"/>
        <end position="439"/>
    </location>
</feature>
<feature type="coiled-coil region" evidence="1">
    <location>
        <begin position="762"/>
        <end position="782"/>
    </location>
</feature>
<feature type="splice variant" id="VSP_040894" description="In isoform 2." evidence="11">
    <original>WQTLAQTAEAKSCYWRFVLLHLEVLQAHIFEDGIAGEAAEIEALLEEAAELVDESQPKNAKYYSTYKIRYILKKQEDGLWKFCQSDIQIQK</original>
    <variation>VTVSIHLLLFLYLIMLVYYS</variation>
    <location>
        <begin position="729"/>
        <end position="819"/>
    </location>
</feature>
<feature type="mutagenesis site" description="In parc6-2; reduced number of heterogeneous chloroplasts." evidence="2">
    <original>D</original>
    <variation>N</variation>
    <location>
        <position position="112"/>
    </location>
</feature>
<feature type="sequence conflict" description="In Ref. 3; AAL66980." evidence="11" ref="3">
    <original>E</original>
    <variation>G</variation>
    <location>
        <position position="268"/>
    </location>
</feature>
<feature type="helix" evidence="14">
    <location>
        <begin position="646"/>
        <end position="656"/>
    </location>
</feature>
<feature type="strand" evidence="14">
    <location>
        <begin position="685"/>
        <end position="687"/>
    </location>
</feature>
<feature type="helix" evidence="14">
    <location>
        <begin position="690"/>
        <end position="707"/>
    </location>
</feature>
<feature type="helix" evidence="14">
    <location>
        <begin position="717"/>
        <end position="720"/>
    </location>
</feature>
<feature type="helix" evidence="14">
    <location>
        <begin position="723"/>
        <end position="738"/>
    </location>
</feature>
<feature type="strand" evidence="14">
    <location>
        <begin position="742"/>
        <end position="759"/>
    </location>
</feature>
<feature type="strand" evidence="14">
    <location>
        <begin position="761"/>
        <end position="763"/>
    </location>
</feature>
<feature type="strand" evidence="14">
    <location>
        <begin position="765"/>
        <end position="780"/>
    </location>
</feature>
<feature type="strand" evidence="15">
    <location>
        <begin position="784"/>
        <end position="786"/>
    </location>
</feature>
<feature type="strand" evidence="14">
    <location>
        <begin position="788"/>
        <end position="802"/>
    </location>
</feature>
<feature type="strand" evidence="14">
    <location>
        <begin position="804"/>
        <end position="817"/>
    </location>
</feature>
<proteinExistence type="evidence at protein level"/>
<comment type="function">
    <text evidence="2 3 4 5 6 7">Component of the plastid division machinery required for PDV1 localization to constriction sites. Involved in chloroplast division site placement (PubMed:23936263, PubMed:28984364). Required for the proper formation of FtsZ rings at the division site in nongreen plastids (e.g. etioplasts) (PubMed:23936263). Inhibits FtsZ assembly, functioning as an antagonistic regulator of FtsZ dynamics against ARC6, by recruiting ARC3 to the middle of the plastid to facilitate its interaction with FtsZ proteins (PubMed:26527658, PubMed:30824505). Required during stromule biogenesis in the leaf epidermis, especially in non-mesophyll cells plastids (PubMed:28984364).</text>
</comment>
<comment type="subunit">
    <text evidence="2 3 5 6 7">Self-interacts (PubMed:19564892, PubMed:28984364). Interacts (via N-terminus) with ARC3 (via MORN domains) (PubMed:19453460, PubMed:19564892, PubMed:26527658). Binds (via N-terminus) to FTSZ2 proteins, FTSZ2-1 and FTSZ2-2 (PubMed:26527658, PubMed:28984364, PubMed:30824505). Recruited ARC3 to the middle of the plastid where subsequent complex made of CDP1/PARC6, ARC3 and FtsZ proteins can form; this complex enhances the dynamics of Z rings during chloroplast division (PubMed:30824505). Interacts (via C-terminus) with PDV1 (via C-terminus) (PubMed:26527658). Interacts with MIND1 (PubMed:28984364).</text>
</comment>
<comment type="interaction">
    <interactant intactId="EBI-2349234">
        <id>Q8VY16</id>
    </interactant>
    <interactant intactId="EBI-2367605">
        <id>Q6F6B5</id>
        <label>ARC3</label>
    </interactant>
    <organismsDiffer>false</organismsDiffer>
    <experiments>4</experiments>
</comment>
<comment type="subcellular location">
    <subcellularLocation>
        <location evidence="2">Plastid</location>
        <location evidence="2">Chloroplast inner membrane</location>
        <topology evidence="2">Single-pass membrane protein</topology>
    </subcellularLocation>
    <text evidence="2">Localizes both to the mid-plastid and to a single spot at one pole.</text>
</comment>
<comment type="alternative products">
    <event type="alternative splicing"/>
    <isoform>
        <id>Q8VY16-1</id>
        <name>1</name>
        <sequence type="displayed"/>
    </isoform>
    <isoform>
        <id>Q8VY16-2</id>
        <name>2</name>
        <sequence type="described" ref="VSP_040894"/>
    </isoform>
</comment>
<comment type="tissue specificity">
    <text evidence="3">Exclusively expressed in young green tissues such as young cotyledons, shoot apex, emerging leaves and budding inflorescence.</text>
</comment>
<comment type="disruption phenotype">
    <text evidence="2 3 4 6">Defects of chloroplast and FtsZ filament morphology (e.g. long FtsZ filaments formed by multiple rings or spirals); elongated chloroplasts with multiple division sites (PubMed:19453460, PubMed:19564892, PubMed:23936263). Aberrant stromule biogenesis in the leaf epidermis associated with giant and pleomorphic amoeboid chloroplasts, typically having one or more constrictions as well as one or more extremely long stromules (PubMed:28984364). Reduced number of enlarged etioplasts in cotyledons associated with the formation of multiple FtsZ-rings (PubMed:23936263).</text>
</comment>
<comment type="sequence caution" evidence="11">
    <conflict type="erroneous gene model prediction">
        <sequence resource="EMBL-CDS" id="BAB02958"/>
    </conflict>
</comment>